<comment type="function">
    <text evidence="5 9">Degrades single-stranded DNA (ssDNA) in a highly processive manner (PubMed:23609540). Also functions as a DNA deoxyribophosphodiesterase that releases deoxyribose-phosphate moieties following the cleavage of DNA at an apurinic/apyrimidinic (AP) site by either an AP endonuclease or AP lyase (PubMed:1329027).</text>
</comment>
<comment type="catalytic activity">
    <reaction evidence="7 8 9">
        <text>Exonucleolytic cleavage in the 3'- to 5'-direction to yield nucleoside 5'-phosphates.</text>
        <dbReference type="EC" id="3.1.11.1"/>
    </reaction>
</comment>
<comment type="cofactor">
    <cofactor evidence="6 7 8 9">
        <name>Mg(2+)</name>
        <dbReference type="ChEBI" id="CHEBI:18420"/>
    </cofactor>
    <text evidence="7">Binds 2 Mg(2+) ions per monomer.</text>
</comment>
<comment type="activity regulation">
    <text evidence="9">Inhibited by 10 mM EDTA.</text>
</comment>
<comment type="subunit">
    <text evidence="7 8 9">Monomer (PubMed:23609540). Interacts with ssb (via C-terminus); this interaction stimulates the exonuclease activity by recruiting the enzyme to its substrate (PubMed:18591666, PubMed:20018747).</text>
</comment>
<comment type="domain">
    <text evidence="7 9 14 15">The N-terminal exonuclease domain and the exonuclease C-terminal domain form a central positively charged groove which binds the DNA.</text>
</comment>
<accession>P04995</accession>
<proteinExistence type="evidence at protein level"/>
<feature type="chain" id="PRO_0000087110" description="Exodeoxyribonuclease I">
    <location>
        <begin position="1"/>
        <end position="475"/>
    </location>
</feature>
<feature type="domain" description="Exonuclease" evidence="1">
    <location>
        <begin position="13"/>
        <end position="192"/>
    </location>
</feature>
<feature type="domain" description="ExoI SH3-like" evidence="2">
    <location>
        <begin position="202"/>
        <end position="355"/>
    </location>
</feature>
<feature type="domain" description="ExoI C-terminal" evidence="3">
    <location>
        <begin position="358"/>
        <end position="475"/>
    </location>
</feature>
<feature type="binding site" evidence="4 6 7 8 9">
    <location>
        <position position="15"/>
    </location>
    <ligand>
        <name>Mg(2+)</name>
        <dbReference type="ChEBI" id="CHEBI:18420"/>
        <label>1</label>
    </ligand>
</feature>
<feature type="binding site" evidence="6">
    <location>
        <position position="17"/>
    </location>
    <ligand>
        <name>Mg(2+)</name>
        <dbReference type="ChEBI" id="CHEBI:18420"/>
        <label>2</label>
    </ligand>
</feature>
<feature type="binding site" evidence="6">
    <location>
        <position position="17"/>
    </location>
    <ligand>
        <name>substrate</name>
    </ligand>
</feature>
<feature type="binding site" evidence="6">
    <location>
        <position position="165"/>
    </location>
    <ligand>
        <name>substrate</name>
    </ligand>
</feature>
<feature type="binding site" evidence="6">
    <location>
        <position position="186"/>
    </location>
    <ligand>
        <name>Mg(2+)</name>
        <dbReference type="ChEBI" id="CHEBI:18420"/>
        <label>2</label>
    </ligand>
</feature>
<feature type="site" description="Interaction with single-stranded DNA" evidence="9">
    <location>
        <position position="18"/>
    </location>
</feature>
<feature type="site" description="Interaction with single-stranded DNA" evidence="9">
    <location>
        <position position="66"/>
    </location>
</feature>
<feature type="site" description="Interaction with single-stranded DNA" evidence="9">
    <location>
        <position position="113"/>
    </location>
</feature>
<feature type="site" description="Interaction with single-stranded DNA" evidence="9">
    <location>
        <position position="124"/>
    </location>
</feature>
<feature type="site" description="Interaction with single-stranded DNA" evidence="9">
    <location>
        <position position="128"/>
    </location>
</feature>
<feature type="site" description="Interaction with single-stranded DNA" evidence="9">
    <location>
        <position position="142"/>
    </location>
</feature>
<feature type="site" description="Important for interaction with ssb" evidence="7">
    <location>
        <position position="148"/>
    </location>
</feature>
<feature type="site" description="Interaction with single-stranded DNA" evidence="9 17">
    <location>
        <position position="164"/>
    </location>
</feature>
<feature type="site" description="Important for activity" evidence="9">
    <location>
        <position position="181"/>
    </location>
</feature>
<feature type="site" description="Important for interaction with ssb" evidence="7">
    <location>
        <position position="207"/>
    </location>
</feature>
<feature type="site" description="Interaction with single-stranded DNA" evidence="9">
    <location>
        <position position="214"/>
    </location>
</feature>
<feature type="site" description="Interaction with single-stranded DNA" evidence="9 17">
    <location>
        <position position="257"/>
    </location>
</feature>
<feature type="site" description="Interaction with single-stranded DNA" evidence="9">
    <location>
        <position position="284"/>
    </location>
</feature>
<feature type="site" description="Interaction with single-stranded DNA" evidence="9 17">
    <location>
        <position position="304"/>
    </location>
</feature>
<feature type="site" description="Important for interaction with ssb" evidence="7">
    <location>
        <position position="311"/>
    </location>
</feature>
<feature type="site" description="Important for interaction with ssb" evidence="16">
    <location>
        <position position="338"/>
    </location>
</feature>
<feature type="site" description="Interaction with single-stranded DNA" evidence="9">
    <location>
        <position position="368"/>
    </location>
</feature>
<feature type="site" description="Interaction with single-stranded DNA" evidence="9">
    <location>
        <position position="371"/>
    </location>
</feature>
<feature type="mutagenesis site" description="Strongly reduced ssb-binding. Reduced ssb-dependent nuclease activity." evidence="7">
    <original>R</original>
    <variation>A</variation>
    <location>
        <position position="148"/>
    </location>
</feature>
<feature type="mutagenesis site" description="About 2-fold increased ssb-binding. Weakly increased ssb-independent and ssb-dependent nuclease activity." evidence="7">
    <original>E</original>
    <variation>A</variation>
    <location>
        <position position="150"/>
    </location>
</feature>
<feature type="mutagenesis site" description="Residual nuclease activity." evidence="9">
    <original>H</original>
    <variation>A</variation>
    <location>
        <position position="181"/>
    </location>
</feature>
<feature type="mutagenesis site" description="Strongly reduced ssb-binding. Reduced ssb-dependent nuclease activity." evidence="7">
    <original>Y</original>
    <variation>A</variation>
    <location>
        <position position="207"/>
    </location>
</feature>
<feature type="mutagenesis site" description="7-fold reduced ssb-binding. Reduced ssb-dependent nuclease activity." evidence="7">
    <original>K</original>
    <variation>A</variation>
    <location>
        <position position="227"/>
    </location>
</feature>
<feature type="mutagenesis site" description="2-fold reduced ssb-binding. Weakly reduced ssb-dependent nuclease activity." evidence="7">
    <original>Q</original>
    <variation>A</variation>
    <location>
        <position position="311"/>
    </location>
</feature>
<feature type="mutagenesis site" description="Strongly reduced ssb-binding. Strongly reduced ssb-dependent nuclease activity." evidence="7">
    <original>R</original>
    <variation>A</variation>
    <location>
        <position position="316"/>
    </location>
</feature>
<feature type="mutagenesis site" description="About 2-fold increased ssb-binding. No effect on ssb-dependent nuclease activity." evidence="7">
    <original>E</original>
    <variation>A</variation>
    <location>
        <position position="318"/>
    </location>
</feature>
<feature type="mutagenesis site" description="2-fold reduced ssb-binding. No effect on ssb-dependent nuclease activity." evidence="7">
    <original>D</original>
    <variation>A</variation>
    <location>
        <position position="319"/>
    </location>
</feature>
<feature type="mutagenesis site" description="No effect on ssb-binding and on ssb-dependent nuclease activity." evidence="7">
    <original>R</original>
    <variation>A</variation>
    <location>
        <position position="327"/>
    </location>
</feature>
<feature type="mutagenesis site" description="No effect on ssb-binding and on ssb-dependent nuclease activity." evidence="7">
    <original>L</original>
    <variation>A</variation>
    <location>
        <position position="331"/>
    </location>
</feature>
<feature type="mutagenesis site" description="3-fold reduced ssb-binding. Reduced ssb-dependent nuclease activity." evidence="7">
    <original>R</original>
    <variation>A</variation>
    <location>
        <position position="338"/>
    </location>
</feature>
<feature type="mutagenesis site" description="No effect on ssb-binding and on ssb-dependent nuclease activity." evidence="7">
    <original>Q</original>
    <variation>A</variation>
    <location>
        <position position="448"/>
    </location>
</feature>
<feature type="mutagenesis site" description="No effect on ssb-binding and on ssb-dependent nuclease activity." evidence="7">
    <original>Q</original>
    <variation>A</variation>
    <location>
        <position position="452"/>
    </location>
</feature>
<feature type="sequence conflict" description="In Ref. 1; AAA19938." evidence="13" ref="1">
    <location>
        <begin position="210"/>
        <end position="218"/>
    </location>
</feature>
<feature type="sequence conflict" description="In Ref. 1; AAA19938." evidence="13" ref="1">
    <original>Q</original>
    <variation>H</variation>
    <location>
        <position position="225"/>
    </location>
</feature>
<feature type="sequence conflict" description="In Ref. 1; AAA19938." evidence="13" ref="1">
    <original>V</original>
    <variation>E</variation>
    <location>
        <position position="343"/>
    </location>
</feature>
<feature type="sequence conflict" description="In Ref. 1; AAA19938." evidence="13" ref="1">
    <original>V</original>
    <variation>A</variation>
    <location>
        <position position="475"/>
    </location>
</feature>
<feature type="strand" evidence="18">
    <location>
        <begin position="10"/>
        <end position="21"/>
    </location>
</feature>
<feature type="turn" evidence="18">
    <location>
        <begin position="23"/>
        <end position="25"/>
    </location>
</feature>
<feature type="strand" evidence="18">
    <location>
        <begin position="28"/>
        <end position="36"/>
    </location>
</feature>
<feature type="strand" evidence="18">
    <location>
        <begin position="47"/>
        <end position="51"/>
    </location>
</feature>
<feature type="helix" evidence="18">
    <location>
        <begin position="61"/>
        <end position="67"/>
    </location>
</feature>
<feature type="helix" evidence="18">
    <location>
        <begin position="71"/>
        <end position="77"/>
    </location>
</feature>
<feature type="helix" evidence="18">
    <location>
        <begin position="81"/>
        <end position="92"/>
    </location>
</feature>
<feature type="strand" evidence="18">
    <location>
        <begin position="97"/>
        <end position="103"/>
    </location>
</feature>
<feature type="turn" evidence="18">
    <location>
        <begin position="104"/>
        <end position="107"/>
    </location>
</feature>
<feature type="helix" evidence="18">
    <location>
        <begin position="108"/>
        <end position="118"/>
    </location>
</feature>
<feature type="helix" evidence="18">
    <location>
        <begin position="125"/>
        <end position="127"/>
    </location>
</feature>
<feature type="helix" evidence="18">
    <location>
        <begin position="129"/>
        <end position="131"/>
    </location>
</feature>
<feature type="strand" evidence="18">
    <location>
        <begin position="133"/>
        <end position="136"/>
    </location>
</feature>
<feature type="helix" evidence="18">
    <location>
        <begin position="137"/>
        <end position="147"/>
    </location>
</feature>
<feature type="strand" evidence="18">
    <location>
        <begin position="160"/>
        <end position="162"/>
    </location>
</feature>
<feature type="helix" evidence="18">
    <location>
        <begin position="166"/>
        <end position="172"/>
    </location>
</feature>
<feature type="helix" evidence="18">
    <location>
        <begin position="185"/>
        <end position="200"/>
    </location>
</feature>
<feature type="helix" evidence="18">
    <location>
        <begin position="202"/>
        <end position="210"/>
    </location>
</feature>
<feature type="helix" evidence="18">
    <location>
        <begin position="214"/>
        <end position="219"/>
    </location>
</feature>
<feature type="turn" evidence="18">
    <location>
        <begin position="223"/>
        <end position="226"/>
    </location>
</feature>
<feature type="strand" evidence="18">
    <location>
        <begin position="229"/>
        <end position="232"/>
    </location>
</feature>
<feature type="helix" evidence="18">
    <location>
        <begin position="234"/>
        <end position="236"/>
    </location>
</feature>
<feature type="helix" evidence="18">
    <location>
        <begin position="238"/>
        <end position="240"/>
    </location>
</feature>
<feature type="strand" evidence="18">
    <location>
        <begin position="243"/>
        <end position="251"/>
    </location>
</feature>
<feature type="strand" evidence="18">
    <location>
        <begin position="258"/>
        <end position="263"/>
    </location>
</feature>
<feature type="helix" evidence="18">
    <location>
        <begin position="269"/>
        <end position="273"/>
    </location>
</feature>
<feature type="helix" evidence="19">
    <location>
        <begin position="276"/>
        <end position="285"/>
    </location>
</feature>
<feature type="helix" evidence="20">
    <location>
        <begin position="287"/>
        <end position="289"/>
    </location>
</feature>
<feature type="strand" evidence="18">
    <location>
        <begin position="298"/>
        <end position="302"/>
    </location>
</feature>
<feature type="helix" evidence="21">
    <location>
        <begin position="303"/>
        <end position="305"/>
    </location>
</feature>
<feature type="strand" evidence="18">
    <location>
        <begin position="308"/>
        <end position="311"/>
    </location>
</feature>
<feature type="helix" evidence="18">
    <location>
        <begin position="312"/>
        <end position="314"/>
    </location>
</feature>
<feature type="helix" evidence="18">
    <location>
        <begin position="317"/>
        <end position="323"/>
    </location>
</feature>
<feature type="helix" evidence="18">
    <location>
        <begin position="327"/>
        <end position="339"/>
    </location>
</feature>
<feature type="helix" evidence="18">
    <location>
        <begin position="343"/>
        <end position="346"/>
    </location>
</feature>
<feature type="helix" evidence="18">
    <location>
        <begin position="363"/>
        <end position="365"/>
    </location>
</feature>
<feature type="helix" evidence="18">
    <location>
        <begin position="367"/>
        <end position="369"/>
    </location>
</feature>
<feature type="helix" evidence="18">
    <location>
        <begin position="374"/>
        <end position="385"/>
    </location>
</feature>
<feature type="turn" evidence="18">
    <location>
        <begin position="388"/>
        <end position="390"/>
    </location>
</feature>
<feature type="turn" evidence="20">
    <location>
        <begin position="391"/>
        <end position="393"/>
    </location>
</feature>
<feature type="helix" evidence="18">
    <location>
        <begin position="402"/>
        <end position="414"/>
    </location>
</feature>
<feature type="helix" evidence="18">
    <location>
        <begin position="416"/>
        <end position="418"/>
    </location>
</feature>
<feature type="helix" evidence="18">
    <location>
        <begin position="421"/>
        <end position="434"/>
    </location>
</feature>
<feature type="helix" evidence="18">
    <location>
        <begin position="437"/>
        <end position="453"/>
    </location>
</feature>
<feature type="turn" evidence="18">
    <location>
        <begin position="454"/>
        <end position="456"/>
    </location>
</feature>
<feature type="helix" evidence="18">
    <location>
        <begin position="458"/>
        <end position="473"/>
    </location>
</feature>
<name>EX1_ECOLI</name>
<organism>
    <name type="scientific">Escherichia coli (strain K12)</name>
    <dbReference type="NCBI Taxonomy" id="83333"/>
    <lineage>
        <taxon>Bacteria</taxon>
        <taxon>Pseudomonadati</taxon>
        <taxon>Pseudomonadota</taxon>
        <taxon>Gammaproteobacteria</taxon>
        <taxon>Enterobacterales</taxon>
        <taxon>Enterobacteriaceae</taxon>
        <taxon>Escherichia</taxon>
    </lineage>
</organism>
<protein>
    <recommendedName>
        <fullName>Exodeoxyribonuclease I</fullName>
        <shortName evidence="10">ExoI</shortName>
        <shortName evidence="10">Exonuclease I</shortName>
        <ecNumber evidence="7 8 9">3.1.11.1</ecNumber>
    </recommendedName>
    <alternativeName>
        <fullName>DNA deoxyribophosphodiesterase</fullName>
        <shortName>dRPase</shortName>
    </alternativeName>
</protein>
<reference key="1">
    <citation type="journal article" date="1987" name="J. Biol. Chem.">
        <title>Determination of the nucleotide sequence for the exonuclease I structural gene (sbcB) of Escherichia coli K12.</title>
        <authorList>
            <person name="Phillips G.J."/>
            <person name="Kushner S.R."/>
        </authorList>
    </citation>
    <scope>NUCLEOTIDE SEQUENCE [GENOMIC DNA]</scope>
    <scope>PROTEIN SEQUENCE OF 1-12</scope>
    <source>
        <strain>K12</strain>
    </source>
</reference>
<reference key="2">
    <citation type="submission" date="1993-10" db="EMBL/GenBank/DDBJ databases">
        <title>Automated multiplex sequencing of the E.coli genome.</title>
        <authorList>
            <person name="Richterich P."/>
            <person name="Lakey N."/>
            <person name="Gryan G."/>
            <person name="Jaehn L."/>
            <person name="Mintz L."/>
            <person name="Robison K."/>
            <person name="Church G.M."/>
        </authorList>
    </citation>
    <scope>NUCLEOTIDE SEQUENCE [LARGE SCALE GENOMIC DNA]</scope>
    <source>
        <strain>K12 / BHB2600</strain>
    </source>
</reference>
<reference key="3">
    <citation type="journal article" date="1996" name="DNA Res.">
        <title>A 460-kb DNA sequence of the Escherichia coli K-12 genome corresponding to the 40.1-50.0 min region on the linkage map.</title>
        <authorList>
            <person name="Itoh T."/>
            <person name="Aiba H."/>
            <person name="Baba T."/>
            <person name="Fujita K."/>
            <person name="Hayashi K."/>
            <person name="Inada T."/>
            <person name="Isono K."/>
            <person name="Kasai H."/>
            <person name="Kimura S."/>
            <person name="Kitakawa M."/>
            <person name="Kitagawa M."/>
            <person name="Makino K."/>
            <person name="Miki T."/>
            <person name="Mizobuchi K."/>
            <person name="Mori H."/>
            <person name="Mori T."/>
            <person name="Motomura K."/>
            <person name="Nakade S."/>
            <person name="Nakamura Y."/>
            <person name="Nashimoto H."/>
            <person name="Nishio Y."/>
            <person name="Oshima T."/>
            <person name="Saito N."/>
            <person name="Sampei G."/>
            <person name="Seki Y."/>
            <person name="Sivasundaram S."/>
            <person name="Tagami H."/>
            <person name="Takeda J."/>
            <person name="Takemoto K."/>
            <person name="Wada C."/>
            <person name="Yamamoto Y."/>
            <person name="Horiuchi T."/>
        </authorList>
    </citation>
    <scope>NUCLEOTIDE SEQUENCE [LARGE SCALE GENOMIC DNA]</scope>
    <source>
        <strain>K12 / W3110 / ATCC 27325 / DSM 5911</strain>
    </source>
</reference>
<reference key="4">
    <citation type="journal article" date="1997" name="Science">
        <title>The complete genome sequence of Escherichia coli K-12.</title>
        <authorList>
            <person name="Blattner F.R."/>
            <person name="Plunkett G. III"/>
            <person name="Bloch C.A."/>
            <person name="Perna N.T."/>
            <person name="Burland V."/>
            <person name="Riley M."/>
            <person name="Collado-Vides J."/>
            <person name="Glasner J.D."/>
            <person name="Rode C.K."/>
            <person name="Mayhew G.F."/>
            <person name="Gregor J."/>
            <person name="Davis N.W."/>
            <person name="Kirkpatrick H.A."/>
            <person name="Goeden M.A."/>
            <person name="Rose D.J."/>
            <person name="Mau B."/>
            <person name="Shao Y."/>
        </authorList>
    </citation>
    <scope>NUCLEOTIDE SEQUENCE [LARGE SCALE GENOMIC DNA]</scope>
    <source>
        <strain>K12 / MG1655 / ATCC 47076</strain>
    </source>
</reference>
<reference key="5">
    <citation type="journal article" date="2006" name="Mol. Syst. Biol.">
        <title>Highly accurate genome sequences of Escherichia coli K-12 strains MG1655 and W3110.</title>
        <authorList>
            <person name="Hayashi K."/>
            <person name="Morooka N."/>
            <person name="Yamamoto Y."/>
            <person name="Fujita K."/>
            <person name="Isono K."/>
            <person name="Choi S."/>
            <person name="Ohtsubo E."/>
            <person name="Baba T."/>
            <person name="Wanner B.L."/>
            <person name="Mori H."/>
            <person name="Horiuchi T."/>
        </authorList>
    </citation>
    <scope>NUCLEOTIDE SEQUENCE [LARGE SCALE GENOMIC DNA]</scope>
    <source>
        <strain>K12 / W3110 / ATCC 27325 / DSM 5911</strain>
    </source>
</reference>
<reference key="6">
    <citation type="journal article" date="1992" name="Nucleic Acids Res.">
        <title>DNA deoxyribophosphodiesterase of Escherichia coli is associated with exonuclease I.</title>
        <authorList>
            <person name="Sandigursky M."/>
            <person name="Franklin W.A."/>
        </authorList>
    </citation>
    <scope>FUNCTION AS A DRPASE</scope>
</reference>
<reference key="7">
    <citation type="journal article" date="2000" name="Nat. Struct. Biol.">
        <title>Structure of Escherichia coli exonuclease I suggests how processivity is achieved.</title>
        <authorList>
            <person name="Breyer W.A."/>
            <person name="Matthews B.W."/>
        </authorList>
    </citation>
    <scope>X-RAY CRYSTALLOGRAPHY (2.40 ANGSTROMS) IN COMPLEX WITH MAGNESIUM</scope>
    <scope>DOMAIN</scope>
    <source>
        <strain evidence="10">K12 / DH5-alpha</strain>
    </source>
</reference>
<reference key="8">
    <citation type="journal article" date="2008" name="Acta Crystallogr. D">
        <title>Structure of Escherichia coli exonuclease I in complex with thymidine 5'-monophosphate.</title>
        <authorList>
            <person name="Busam R.D."/>
        </authorList>
    </citation>
    <scope>X-RAY CRYSTALLOGRAPHY (1.50 ANGSTROMS) IN COMPLEX WITH DTMP PRODUCT AND MAGNESIUM</scope>
    <scope>COFACTOR</scope>
    <scope>DOMAIN</scope>
    <source>
        <strain evidence="11">K12</strain>
    </source>
</reference>
<reference key="9">
    <citation type="journal article" date="2008" name="Proc. Natl. Acad. Sci. U.S.A.">
        <title>Structural basis of Escherichia coli single-stranded DNA-binding protein stimulation of exonuclease I.</title>
        <authorList>
            <person name="Lu D."/>
            <person name="Keck J.L."/>
        </authorList>
    </citation>
    <scope>X-RAY CRYSTALLOGRAPHY (1.70 ANGSTROMS) OF APO FORM AND IN COMPLEX WITH SSB TAIL PEPTIDE AND MAGNESIUM</scope>
    <scope>CATALYTIC ACTIVITY</scope>
    <scope>COFACTOR</scope>
    <scope>INTERACTION WITH SSB</scope>
    <scope>DOMAIN</scope>
    <scope>SITES</scope>
    <scope>MUTAGENESIS OF ARG-148; GLU-150; TYR-207; LYS-227; GLN-311; ARG-316; GLU-318; ASP-319; ARG-327; LEU-331; ARG-338; GLN-448 AND GLN-452</scope>
</reference>
<reference key="10">
    <citation type="journal article" date="2010" name="Proc. Natl. Acad. Sci. U.S.A.">
        <title>Small-molecule tools for dissecting the roles of SSB/protein interactions in genome maintenance.</title>
        <authorList>
            <person name="Lu D."/>
            <person name="Bernstein D.A."/>
            <person name="Satyshur K.A."/>
            <person name="Keck J.L."/>
        </authorList>
    </citation>
    <scope>X-RAY CRYSTALLOGRAPHY (1.55 ANGSTROMS) IN COMPLEXES WITH INHIBITORS AND MAGNESIUM</scope>
    <scope>CATALYTIC ACTIVITY</scope>
    <scope>COFACTOR</scope>
    <scope>INTERACTION WITH SSB</scope>
    <scope>SITE</scope>
</reference>
<reference key="11">
    <citation type="submission" date="2012-09" db="PDB data bank">
        <title>The structures of Escherichia coli exonuclease I in complex with the single strand DNA.</title>
        <authorList>
            <person name="Qiu R."/>
            <person name="Lou T."/>
            <person name="Wei J."/>
            <person name="Liu M."/>
            <person name="Gu S."/>
            <person name="Tang R."/>
            <person name="Ji C."/>
            <person name="Gong W."/>
        </authorList>
    </citation>
    <scope>X-RAY CRYSTALLOGRAPHY (2.00 ANGSTROMS) IN COMPLEXES WITH SINGLE-STRANDED DNA SUBSTRATES AND ZINC</scope>
</reference>
<reference key="12">
    <citation type="journal article" date="2013" name="Nucleic Acids Res.">
        <title>Crystal structures of Escherichia coli exonuclease I in complex with single-stranded DNA provide insights into the mechanism of processive digestion.</title>
        <authorList>
            <person name="Korada S.K."/>
            <person name="Johns T.D."/>
            <person name="Smith C.E."/>
            <person name="Jones N.D."/>
            <person name="McCabe K.A."/>
            <person name="Bell C.E."/>
        </authorList>
    </citation>
    <scope>X-RAY CRYSTALLOGRAPHY (1.95 ANGSTROMS) IN COMPLEXES WITH SINGLE-STRANDED DNA SUBSTRATES AND MAGNESIUM</scope>
    <scope>FUNCTION</scope>
    <scope>CATALYTIC ACTIVITY</scope>
    <scope>COFACTOR</scope>
    <scope>ACTIVITY REGULATION</scope>
    <scope>SUBUNIT</scope>
    <scope>DOMAIN</scope>
    <scope>MUTAGENESIS OF HIS-181</scope>
    <source>
        <strain evidence="12">K12</strain>
    </source>
</reference>
<evidence type="ECO:0000255" key="1"/>
<evidence type="ECO:0000255" key="2">
    <source>
        <dbReference type="PROSITE-ProRule" id="PRU01120"/>
    </source>
</evidence>
<evidence type="ECO:0000255" key="3">
    <source>
        <dbReference type="PROSITE-ProRule" id="PRU01121"/>
    </source>
</evidence>
<evidence type="ECO:0000269" key="4">
    <source>
    </source>
</evidence>
<evidence type="ECO:0000269" key="5">
    <source>
    </source>
</evidence>
<evidence type="ECO:0000269" key="6">
    <source>
    </source>
</evidence>
<evidence type="ECO:0000269" key="7">
    <source>
    </source>
</evidence>
<evidence type="ECO:0000269" key="8">
    <source>
    </source>
</evidence>
<evidence type="ECO:0000269" key="9">
    <source>
    </source>
</evidence>
<evidence type="ECO:0000303" key="10">
    <source>
    </source>
</evidence>
<evidence type="ECO:0000303" key="11">
    <source>
    </source>
</evidence>
<evidence type="ECO:0000303" key="12">
    <source>
    </source>
</evidence>
<evidence type="ECO:0000305" key="13"/>
<evidence type="ECO:0000305" key="14">
    <source>
    </source>
</evidence>
<evidence type="ECO:0000305" key="15">
    <source>
    </source>
</evidence>
<evidence type="ECO:0000305" key="16">
    <source>
    </source>
</evidence>
<evidence type="ECO:0007744" key="17">
    <source>
        <dbReference type="PDB" id="4HCC"/>
    </source>
</evidence>
<evidence type="ECO:0007829" key="18">
    <source>
        <dbReference type="PDB" id="2QXF"/>
    </source>
</evidence>
<evidence type="ECO:0007829" key="19">
    <source>
        <dbReference type="PDB" id="3HL8"/>
    </source>
</evidence>
<evidence type="ECO:0007829" key="20">
    <source>
        <dbReference type="PDB" id="4HCB"/>
    </source>
</evidence>
<evidence type="ECO:0007829" key="21">
    <source>
        <dbReference type="PDB" id="4JRQ"/>
    </source>
</evidence>
<sequence>MMNDGKQQSTFLFHDYETFGTHPALDRPAQFAAIRTDSEFNVIGEPEVFYCKPADDYLPQPGAVLITGITPQEARAKGENEAAFAARIHSLFTVPKTCILGYNNVRFDDEVTRNIFYRNFYDPYAWSWQHDNSRWDLLDVMRACYALRPEGINWPENDDGLPSFRLEHLTKANGIEHSNAHDAMADVYATIAMAKLVKTRQPRLFDYLFTHRNKHKLMALIDVPQMKPLVHVSGMFGAWRGNTSWVAPLAWHPENRNAVIMVDLAGDISPLLELDSDTLRERLYTAKTDLGDNAAVPVKLVHINKCPVLAQANTLRPEDADRLGINRQHCLDNLKILRENPQVREKVVAIFAEAEPFTPSDNVDAQLYNGFFSDADRAAMKIVLETEPRNLPALDITFVDKRIEKLLFNYRARNFPGTLDYAEQQRWLEHRRQVFTPEFLQGYADELQMLVQQYADDKEKVALLKALWQYAEEIV</sequence>
<dbReference type="EC" id="3.1.11.1" evidence="7 8 9"/>
<dbReference type="EMBL" id="J02641">
    <property type="protein sequence ID" value="AAA19938.1"/>
    <property type="molecule type" value="Unassigned_DNA"/>
</dbReference>
<dbReference type="EMBL" id="U00009">
    <property type="protein sequence ID" value="AAA16417.1"/>
    <property type="molecule type" value="Genomic_DNA"/>
</dbReference>
<dbReference type="EMBL" id="U00096">
    <property type="protein sequence ID" value="AAC75072.1"/>
    <property type="molecule type" value="Genomic_DNA"/>
</dbReference>
<dbReference type="EMBL" id="AP009048">
    <property type="protein sequence ID" value="BAA15839.1"/>
    <property type="molecule type" value="Genomic_DNA"/>
</dbReference>
<dbReference type="PIR" id="B64966">
    <property type="entry name" value="NCECX1"/>
</dbReference>
<dbReference type="RefSeq" id="NP_416515.1">
    <property type="nucleotide sequence ID" value="NC_000913.3"/>
</dbReference>
<dbReference type="RefSeq" id="WP_000980589.1">
    <property type="nucleotide sequence ID" value="NZ_LN832404.1"/>
</dbReference>
<dbReference type="PDB" id="1FXX">
    <property type="method" value="X-ray"/>
    <property type="resolution" value="2.40 A"/>
    <property type="chains" value="A=1-475"/>
</dbReference>
<dbReference type="PDB" id="2QXF">
    <property type="method" value="X-ray"/>
    <property type="resolution" value="1.50 A"/>
    <property type="chains" value="A=1-475"/>
</dbReference>
<dbReference type="PDB" id="3C94">
    <property type="method" value="X-ray"/>
    <property type="resolution" value="2.70 A"/>
    <property type="chains" value="A=1-475"/>
</dbReference>
<dbReference type="PDB" id="3C95">
    <property type="method" value="X-ray"/>
    <property type="resolution" value="1.70 A"/>
    <property type="chains" value="A=1-475"/>
</dbReference>
<dbReference type="PDB" id="3HL8">
    <property type="method" value="X-ray"/>
    <property type="resolution" value="1.55 A"/>
    <property type="chains" value="A=1-475"/>
</dbReference>
<dbReference type="PDB" id="3HP9">
    <property type="method" value="X-ray"/>
    <property type="resolution" value="1.60 A"/>
    <property type="chains" value="A=1-475"/>
</dbReference>
<dbReference type="PDB" id="4HCB">
    <property type="method" value="X-ray"/>
    <property type="resolution" value="2.00 A"/>
    <property type="chains" value="A/B=1-475"/>
</dbReference>
<dbReference type="PDB" id="4HCC">
    <property type="method" value="X-ray"/>
    <property type="resolution" value="2.96 A"/>
    <property type="chains" value="A/B=1-475"/>
</dbReference>
<dbReference type="PDB" id="4JRP">
    <property type="method" value="X-ray"/>
    <property type="resolution" value="1.95 A"/>
    <property type="chains" value="A/B=1-475"/>
</dbReference>
<dbReference type="PDB" id="4JRQ">
    <property type="method" value="X-ray"/>
    <property type="resolution" value="3.00 A"/>
    <property type="chains" value="A/B=1-475"/>
</dbReference>
<dbReference type="PDB" id="4JS4">
    <property type="method" value="X-ray"/>
    <property type="resolution" value="3.10 A"/>
    <property type="chains" value="A/B=1-475"/>
</dbReference>
<dbReference type="PDB" id="4JS5">
    <property type="method" value="X-ray"/>
    <property type="resolution" value="3.50 A"/>
    <property type="chains" value="A/B=1-475"/>
</dbReference>
<dbReference type="PDBsum" id="1FXX"/>
<dbReference type="PDBsum" id="2QXF"/>
<dbReference type="PDBsum" id="3C94"/>
<dbReference type="PDBsum" id="3C95"/>
<dbReference type="PDBsum" id="3HL8"/>
<dbReference type="PDBsum" id="3HP9"/>
<dbReference type="PDBsum" id="4HCB"/>
<dbReference type="PDBsum" id="4HCC"/>
<dbReference type="PDBsum" id="4JRP"/>
<dbReference type="PDBsum" id="4JRQ"/>
<dbReference type="PDBsum" id="4JS4"/>
<dbReference type="PDBsum" id="4JS5"/>
<dbReference type="SMR" id="P04995"/>
<dbReference type="BioGRID" id="4260414">
    <property type="interactions" value="104"/>
</dbReference>
<dbReference type="DIP" id="DIP-10827N"/>
<dbReference type="FunCoup" id="P04995">
    <property type="interactions" value="102"/>
</dbReference>
<dbReference type="IntAct" id="P04995">
    <property type="interactions" value="7"/>
</dbReference>
<dbReference type="STRING" id="511145.b2011"/>
<dbReference type="jPOST" id="P04995"/>
<dbReference type="PaxDb" id="511145-b2011"/>
<dbReference type="EnsemblBacteria" id="AAC75072">
    <property type="protein sequence ID" value="AAC75072"/>
    <property type="gene ID" value="b2011"/>
</dbReference>
<dbReference type="GeneID" id="946529"/>
<dbReference type="KEGG" id="ecj:JW1993"/>
<dbReference type="KEGG" id="eco:b2011"/>
<dbReference type="EchoBASE" id="EB0919"/>
<dbReference type="eggNOG" id="COG2925">
    <property type="taxonomic scope" value="Bacteria"/>
</dbReference>
<dbReference type="HOGENOM" id="CLU_043508_1_1_6"/>
<dbReference type="InParanoid" id="P04995"/>
<dbReference type="OMA" id="YWHDYET"/>
<dbReference type="OrthoDB" id="9763470at2"/>
<dbReference type="PhylomeDB" id="P04995"/>
<dbReference type="BioCyc" id="EcoCyc:EG10926-MONOMER"/>
<dbReference type="BioCyc" id="MetaCyc:EG10926-MONOMER"/>
<dbReference type="BRENDA" id="3.1.11.1">
    <property type="organism ID" value="2026"/>
</dbReference>
<dbReference type="EvolutionaryTrace" id="P04995"/>
<dbReference type="PRO" id="PR:P04995"/>
<dbReference type="Proteomes" id="UP000000625">
    <property type="component" value="Chromosome"/>
</dbReference>
<dbReference type="GO" id="GO:0000175">
    <property type="term" value="F:3'-5'-RNA exonuclease activity"/>
    <property type="evidence" value="ECO:0007669"/>
    <property type="project" value="InterPro"/>
</dbReference>
<dbReference type="GO" id="GO:0051575">
    <property type="term" value="F:5'-deoxyribose-5-phosphate lyase activity"/>
    <property type="evidence" value="ECO:0000314"/>
    <property type="project" value="UniProtKB"/>
</dbReference>
<dbReference type="GO" id="GO:0000287">
    <property type="term" value="F:magnesium ion binding"/>
    <property type="evidence" value="ECO:0000314"/>
    <property type="project" value="UniProtKB"/>
</dbReference>
<dbReference type="GO" id="GO:0008310">
    <property type="term" value="F:single-stranded DNA 3'-5' DNA exonuclease activity"/>
    <property type="evidence" value="ECO:0000314"/>
    <property type="project" value="UniProtKB"/>
</dbReference>
<dbReference type="GO" id="GO:0003697">
    <property type="term" value="F:single-stranded DNA binding"/>
    <property type="evidence" value="ECO:0000314"/>
    <property type="project" value="UniProtKB"/>
</dbReference>
<dbReference type="GO" id="GO:0006308">
    <property type="term" value="P:DNA catabolic process"/>
    <property type="evidence" value="ECO:0000314"/>
    <property type="project" value="UniProtKB"/>
</dbReference>
<dbReference type="GO" id="GO:0006281">
    <property type="term" value="P:DNA repair"/>
    <property type="evidence" value="ECO:0007669"/>
    <property type="project" value="UniProtKB-KW"/>
</dbReference>
<dbReference type="GO" id="GO:0006274">
    <property type="term" value="P:DNA replication termination"/>
    <property type="evidence" value="ECO:0000269"/>
    <property type="project" value="EcoCyc"/>
</dbReference>
<dbReference type="CDD" id="cd06138">
    <property type="entry name" value="ExoI_N"/>
    <property type="match status" value="1"/>
</dbReference>
<dbReference type="FunFam" id="1.10.287.1240:FF:000001">
    <property type="entry name" value="Exodeoxyribonuclease I"/>
    <property type="match status" value="1"/>
</dbReference>
<dbReference type="FunFam" id="1.20.1280.70:FF:000001">
    <property type="entry name" value="Exodeoxyribonuclease I"/>
    <property type="match status" value="1"/>
</dbReference>
<dbReference type="FunFam" id="3.30.1520.20:FF:000001">
    <property type="entry name" value="Exodeoxyribonuclease I"/>
    <property type="match status" value="1"/>
</dbReference>
<dbReference type="FunFam" id="3.30.420.10:FF:000033">
    <property type="entry name" value="Exodeoxyribonuclease I"/>
    <property type="match status" value="1"/>
</dbReference>
<dbReference type="Gene3D" id="1.10.287.1240">
    <property type="match status" value="1"/>
</dbReference>
<dbReference type="Gene3D" id="3.30.1520.20">
    <property type="entry name" value="Exonuclease ExoI, domain 2"/>
    <property type="match status" value="1"/>
</dbReference>
<dbReference type="Gene3D" id="1.20.1280.70">
    <property type="entry name" value="Exonuclease ExoI, domain 3"/>
    <property type="match status" value="1"/>
</dbReference>
<dbReference type="Gene3D" id="3.30.420.10">
    <property type="entry name" value="Ribonuclease H-like superfamily/Ribonuclease H"/>
    <property type="match status" value="1"/>
</dbReference>
<dbReference type="InterPro" id="IPR023607">
    <property type="entry name" value="Exodeoxyribonuclease_I"/>
</dbReference>
<dbReference type="InterPro" id="IPR034748">
    <property type="entry name" value="EXOI_C"/>
</dbReference>
<dbReference type="InterPro" id="IPR034747">
    <property type="entry name" value="EXOI_SH3"/>
</dbReference>
<dbReference type="InterPro" id="IPR038649">
    <property type="entry name" value="EXOI_SH3_sf"/>
</dbReference>
<dbReference type="InterPro" id="IPR013620">
    <property type="entry name" value="Exonuc_1_C"/>
</dbReference>
<dbReference type="InterPro" id="IPR013520">
    <property type="entry name" value="Exonuclease_RNaseT/DNA_pol3"/>
</dbReference>
<dbReference type="InterPro" id="IPR022894">
    <property type="entry name" value="Oligoribonuclease"/>
</dbReference>
<dbReference type="InterPro" id="IPR012337">
    <property type="entry name" value="RNaseH-like_sf"/>
</dbReference>
<dbReference type="InterPro" id="IPR036397">
    <property type="entry name" value="RNaseH_sf"/>
</dbReference>
<dbReference type="NCBIfam" id="NF008746">
    <property type="entry name" value="PRK11779.1"/>
    <property type="match status" value="1"/>
</dbReference>
<dbReference type="PANTHER" id="PTHR11046:SF11">
    <property type="entry name" value="EXODEOXYRIBONUCLEASE I"/>
    <property type="match status" value="1"/>
</dbReference>
<dbReference type="PANTHER" id="PTHR11046">
    <property type="entry name" value="OLIGORIBONUCLEASE, MITOCHONDRIAL"/>
    <property type="match status" value="1"/>
</dbReference>
<dbReference type="Pfam" id="PF08411">
    <property type="entry name" value="Exonuc_X-T_C"/>
    <property type="match status" value="1"/>
</dbReference>
<dbReference type="Pfam" id="PF00929">
    <property type="entry name" value="RNase_T"/>
    <property type="match status" value="1"/>
</dbReference>
<dbReference type="PIRSF" id="PIRSF000977">
    <property type="entry name" value="Exodeoxyribonuclease_I"/>
    <property type="match status" value="1"/>
</dbReference>
<dbReference type="SMART" id="SM00479">
    <property type="entry name" value="EXOIII"/>
    <property type="match status" value="1"/>
</dbReference>
<dbReference type="SUPFAM" id="SSF53098">
    <property type="entry name" value="Ribonuclease H-like"/>
    <property type="match status" value="1"/>
</dbReference>
<dbReference type="PROSITE" id="PS51785">
    <property type="entry name" value="EXOI_C"/>
    <property type="match status" value="1"/>
</dbReference>
<dbReference type="PROSITE" id="PS51784">
    <property type="entry name" value="EXOI_SH3"/>
    <property type="match status" value="1"/>
</dbReference>
<gene>
    <name type="primary">sbcB</name>
    <name type="synonym">cpeA</name>
    <name type="synonym">xonA</name>
    <name type="ordered locus">b2011</name>
    <name type="ordered locus">JW1993</name>
</gene>
<keyword id="KW-0002">3D-structure</keyword>
<keyword id="KW-0903">Direct protein sequencing</keyword>
<keyword id="KW-0227">DNA damage</keyword>
<keyword id="KW-0234">DNA repair</keyword>
<keyword id="KW-0238">DNA-binding</keyword>
<keyword id="KW-0269">Exonuclease</keyword>
<keyword id="KW-0378">Hydrolase</keyword>
<keyword id="KW-0460">Magnesium</keyword>
<keyword id="KW-0479">Metal-binding</keyword>
<keyword id="KW-0540">Nuclease</keyword>
<keyword id="KW-1185">Reference proteome</keyword>
<keyword id="KW-0862">Zinc</keyword>